<gene>
    <name evidence="16" type="primary">Hcf</name>
    <name type="ORF">CG1710</name>
</gene>
<evidence type="ECO:0000255" key="1"/>
<evidence type="ECO:0000255" key="2">
    <source>
        <dbReference type="PROSITE-ProRule" id="PRU00316"/>
    </source>
</evidence>
<evidence type="ECO:0000256" key="3">
    <source>
        <dbReference type="SAM" id="MobiDB-lite"/>
    </source>
</evidence>
<evidence type="ECO:0000269" key="4">
    <source>
    </source>
</evidence>
<evidence type="ECO:0000269" key="5">
    <source>
    </source>
</evidence>
<evidence type="ECO:0000269" key="6">
    <source>
    </source>
</evidence>
<evidence type="ECO:0000269" key="7">
    <source>
    </source>
</evidence>
<evidence type="ECO:0000269" key="8">
    <source>
    </source>
</evidence>
<evidence type="ECO:0000269" key="9">
    <source>
    </source>
</evidence>
<evidence type="ECO:0000269" key="10">
    <source>
    </source>
</evidence>
<evidence type="ECO:0000269" key="11">
    <source>
    </source>
</evidence>
<evidence type="ECO:0000303" key="12">
    <source>
    </source>
</evidence>
<evidence type="ECO:0000303" key="13">
    <source>
    </source>
</evidence>
<evidence type="ECO:0000305" key="14"/>
<evidence type="ECO:0000305" key="15">
    <source>
    </source>
</evidence>
<evidence type="ECO:0000312" key="16">
    <source>
        <dbReference type="EMBL" id="AAF59349.2"/>
    </source>
</evidence>
<evidence type="ECO:0000312" key="17">
    <source>
        <dbReference type="EMBL" id="AAK28427.1"/>
    </source>
</evidence>
<evidence type="ECO:0000312" key="18">
    <source>
        <dbReference type="EMBL" id="AAL28531.1"/>
    </source>
</evidence>
<evidence type="ECO:0000312" key="19">
    <source>
        <dbReference type="EMBL" id="AAT94497.1"/>
    </source>
</evidence>
<evidence type="ECO:0000312" key="20">
    <source>
        <dbReference type="EMBL" id="CAC44472.1"/>
    </source>
</evidence>
<accession>Q9V4C8</accession>
<accession>A4V109</accession>
<accession>H9XVN5</accession>
<accession>Q8IGU2</accession>
<accession>Q95S26</accession>
<accession>Q95ZF3</accession>
<accession>Q9BKH1</accession>
<protein>
    <recommendedName>
        <fullName>Host cell factor</fullName>
        <shortName>dHcf</shortName>
    </recommendedName>
    <component>
        <recommendedName>
            <fullName>HCF N-terminal chain</fullName>
        </recommendedName>
    </component>
    <component>
        <recommendedName>
            <fullName>HCF C-terminal chain</fullName>
        </recommendedName>
    </component>
</protein>
<proteinExistence type="evidence at protein level"/>
<keyword id="KW-0025">Alternative splicing</keyword>
<keyword id="KW-0068">Autocatalytic cleavage</keyword>
<keyword id="KW-0131">Cell cycle</keyword>
<keyword id="KW-0880">Kelch repeat</keyword>
<keyword id="KW-0539">Nucleus</keyword>
<keyword id="KW-0597">Phosphoprotein</keyword>
<keyword id="KW-1185">Reference proteome</keyword>
<keyword id="KW-0677">Repeat</keyword>
<sequence length="1500" mass="160185">MEGSDFVDPAFSSGERISASDLNSEHIIQAENHSFANRISMDMDVPDGHQLDSNLTGFRWKRVLNPTGPQPRPRHGHRAINIKELMVVFGGGNEGIVDELHVYNTVTNQWYVPVLKGDVPNGCAAYGFVVEGTRMFVFGGMIEYGKYSNELYELQATKWEWRKMYPESPDSGLSPCPRLGHSFTMVGEKIFLFGGLANESDDPKNNIPKYLNDLYILDTRGVHSHNGKWIVPKTYGDSPPPRESHTGISFATKSNGNLNLLIYGGMSGCRLGDLWLLETDSMTWSKPKTSGEAPLPRSLHSSTMIGNKMYVFGGWVPLVINDSKSTTEREWKCTNTLAVLDLETMTWENVTLDTVEENVPRARAGHCAVGIQSRLYVWSGRDGYRKAWNNQVCCKDLWYLEVSKPLYAVKVALVRASTHALELSWTATTFAAAYVLQIQKIEQPLNTSSKLLSNNIVQQGTPTSAETSGINISANRSGSALGLGVEATSTVLKLEKESLQLSGCQPETNVQPSVNDLLQSMSQPSSPASRADKDPLSSGGGTTFNLSTSVASVHPQISVISSTAAVTGNDTASPSGAINSILQKFRPVVTAVRTSTTTAVSIATSTSDPLSVRVPSTMSANVVLSSSSSTLRIVPSVTASHSLRIASSQASGNNCRSSSAINILKTALPNVAVQSQPTSSTTTSIGGKQYFIQKPLTLAPNVQLQFVKTSGGMTVQTLPKVNFTASKGTPPHGISIANPHLASGITQIQGSTVPGSQIQKPIVSGNVLKLVSPHTMAGGKLIMKNSNILQMGKVTPNVMGGKPAFVITNKQGTPLGNQQIIIVTTGGNVRSVPTSTVMTSAGGSASGTNIVSIVNSTSTTPSPLQALSGQKTLISNQSGVKMLRNISSVQASSSMAFGQKQSGTPIHQKTALYIGGKAVTVMSTNTSMAASGNKVMVLPGTSSNNSPATTTALSARKSFVFNAGGSPRTVTLATKSINAKSIPQSQPVTETNNHSVATIKDTDPMDDIIEQLDGAGDLLKLSESEGQHGSEENENNGENATSSSASALFTGGDTAGPSRAQNPIVMEHPVDIIEDVSGVSSTTDVNETAIVSGDTIESLKMSEKENDDVKSMGEKSILSDDCHQPTTSETEAATILTTIKSAEALVLETAEIRKDHTGCTIGSLKENQDENKKFKQRQESSPSQNIHQFQNVDGSQLEALASAALLQAATSDTTALALKELIERPESETNTRSSNIAEIQQNNVQSTLAVVVPNTSQNENQKWHTVGVFKDLSHTVTSYIDSNCISDSFFDGIDVDNLPDFSKFPRTNLEPGTAYRFRLSAINSCGRGEWGEISSFKTCLPGFPGAPSAIKISKDVKEGAHLTWEPPPAQKTKEIIEYSVYLAVKPTAKDKALSTPQLAFVRVYVGAANQCTVPNASLSNAHVDCSNKPAIIFRIAARNQKGYGPATQVRWLQDPAAAKQHTPTVTPNLKRGPEKSTIGSSNIANTFCSPHKRGRNGLHD</sequence>
<dbReference type="EMBL" id="AJ320236">
    <property type="protein sequence ID" value="CAC44472.1"/>
    <property type="molecule type" value="mRNA"/>
</dbReference>
<dbReference type="EMBL" id="AF251006">
    <property type="protein sequence ID" value="AAK28427.1"/>
    <property type="molecule type" value="mRNA"/>
</dbReference>
<dbReference type="EMBL" id="AE014135">
    <property type="protein sequence ID" value="AAF59349.2"/>
    <property type="molecule type" value="Genomic_DNA"/>
</dbReference>
<dbReference type="EMBL" id="AE014135">
    <property type="protein sequence ID" value="AAN06529.1"/>
    <property type="molecule type" value="Genomic_DNA"/>
</dbReference>
<dbReference type="EMBL" id="AE014135">
    <property type="protein sequence ID" value="AAN06530.2"/>
    <property type="molecule type" value="Genomic_DNA"/>
</dbReference>
<dbReference type="EMBL" id="AE014135">
    <property type="protein sequence ID" value="AFH06780.1"/>
    <property type="molecule type" value="Genomic_DNA"/>
</dbReference>
<dbReference type="EMBL" id="AY060983">
    <property type="protein sequence ID" value="AAL28531.1"/>
    <property type="status" value="ALT_INIT"/>
    <property type="molecule type" value="mRNA"/>
</dbReference>
<dbReference type="EMBL" id="BT001602">
    <property type="protein sequence ID" value="AAN71357.1"/>
    <property type="molecule type" value="mRNA"/>
</dbReference>
<dbReference type="EMBL" id="BT015268">
    <property type="protein sequence ID" value="AAT94497.1"/>
    <property type="molecule type" value="mRNA"/>
</dbReference>
<dbReference type="RefSeq" id="NP_001245420.1">
    <molecule id="Q9V4C8-6"/>
    <property type="nucleotide sequence ID" value="NM_001258491.3"/>
</dbReference>
<dbReference type="RefSeq" id="NP_524621.2">
    <molecule id="Q9V4C8-1"/>
    <property type="nucleotide sequence ID" value="NM_079882.4"/>
</dbReference>
<dbReference type="RefSeq" id="NP_726566.1">
    <molecule id="Q9V4C8-1"/>
    <property type="nucleotide sequence ID" value="NM_166756.3"/>
</dbReference>
<dbReference type="RefSeq" id="NP_726567.2">
    <molecule id="Q9V4C8-5"/>
    <property type="nucleotide sequence ID" value="NM_166757.3"/>
</dbReference>
<dbReference type="RefSeq" id="NP_995595.1">
    <molecule id="Q9V4C8-1"/>
    <property type="nucleotide sequence ID" value="NM_205873.3"/>
</dbReference>
<dbReference type="SMR" id="Q9V4C8"/>
<dbReference type="BioGRID" id="68622">
    <property type="interactions" value="37"/>
</dbReference>
<dbReference type="ComplexPortal" id="CPX-2287">
    <property type="entry name" value="Histone-lysine N-methyltransferase TRX complex"/>
</dbReference>
<dbReference type="ComplexPortal" id="CPX-2423">
    <property type="entry name" value="SWR1 chromatin remodelling complex"/>
</dbReference>
<dbReference type="ComplexPortal" id="CPX-2742">
    <property type="entry name" value="ATAC histone acetyltransferase complex"/>
</dbReference>
<dbReference type="ComplexPortal" id="CPX-2798">
    <property type="entry name" value="COMPASS complex"/>
</dbReference>
<dbReference type="FunCoup" id="Q9V4C8">
    <property type="interactions" value="1649"/>
</dbReference>
<dbReference type="IntAct" id="Q9V4C8">
    <property type="interactions" value="10"/>
</dbReference>
<dbReference type="MINT" id="Q9V4C8"/>
<dbReference type="STRING" id="7227.FBpp0311451"/>
<dbReference type="GlyGen" id="Q9V4C8">
    <property type="glycosylation" value="8 sites, 1 O-linked glycan (8 sites)"/>
</dbReference>
<dbReference type="iPTMnet" id="Q9V4C8"/>
<dbReference type="PaxDb" id="7227-FBpp0088193"/>
<dbReference type="EnsemblMetazoa" id="FBtr0089125">
    <molecule id="Q9V4C8-1"/>
    <property type="protein sequence ID" value="FBpp0088194"/>
    <property type="gene ID" value="FBgn0039904"/>
</dbReference>
<dbReference type="EnsemblMetazoa" id="FBtr0089126">
    <molecule id="Q9V4C8-1"/>
    <property type="protein sequence ID" value="FBpp0088195"/>
    <property type="gene ID" value="FBgn0039904"/>
</dbReference>
<dbReference type="EnsemblMetazoa" id="FBtr0307379">
    <molecule id="Q9V4C8-6"/>
    <property type="protein sequence ID" value="FBpp0298368"/>
    <property type="gene ID" value="FBgn0039904"/>
</dbReference>
<dbReference type="EnsemblMetazoa" id="FBtr0334479">
    <molecule id="Q9V4C8-5"/>
    <property type="protein sequence ID" value="FBpp0306551"/>
    <property type="gene ID" value="FBgn0039904"/>
</dbReference>
<dbReference type="EnsemblMetazoa" id="FBtr0345284">
    <molecule id="Q9V4C8-1"/>
    <property type="protein sequence ID" value="FBpp0311451"/>
    <property type="gene ID" value="FBgn0039904"/>
</dbReference>
<dbReference type="GeneID" id="43788"/>
<dbReference type="KEGG" id="dme:Dmel_CG1710"/>
<dbReference type="AGR" id="FB:FBgn0039904"/>
<dbReference type="CTD" id="43788"/>
<dbReference type="FlyBase" id="FBgn0039904">
    <property type="gene designation" value="Hcf"/>
</dbReference>
<dbReference type="VEuPathDB" id="VectorBase:FBgn0039904"/>
<dbReference type="eggNOG" id="KOG4152">
    <property type="taxonomic scope" value="Eukaryota"/>
</dbReference>
<dbReference type="GeneTree" id="ENSGT00940000166952"/>
<dbReference type="InParanoid" id="Q9V4C8"/>
<dbReference type="OMA" id="PTTEREW"/>
<dbReference type="OrthoDB" id="10001928at2759"/>
<dbReference type="PhylomeDB" id="Q9V4C8"/>
<dbReference type="Reactome" id="R-DME-3214847">
    <property type="pathway name" value="HATs acetylate histones"/>
</dbReference>
<dbReference type="Reactome" id="R-DME-5689603">
    <property type="pathway name" value="UCH proteinases"/>
</dbReference>
<dbReference type="Reactome" id="R-DME-9772755">
    <property type="pathway name" value="Formation of WDR5-containing histone-modifying complexes"/>
</dbReference>
<dbReference type="SignaLink" id="Q9V4C8"/>
<dbReference type="BioGRID-ORCS" id="43788">
    <property type="hits" value="1 hit in 3 CRISPR screens"/>
</dbReference>
<dbReference type="GenomeRNAi" id="43788"/>
<dbReference type="PRO" id="PR:Q9V4C8"/>
<dbReference type="Proteomes" id="UP000000803">
    <property type="component" value="Chromosome 4"/>
</dbReference>
<dbReference type="Bgee" id="FBgn0039904">
    <property type="expression patterns" value="Expressed in antennal olfactory receptor neuron of basiconic sensillum in antenna and 259 other cell types or tissues"/>
</dbReference>
<dbReference type="GO" id="GO:0140672">
    <property type="term" value="C:ATAC complex"/>
    <property type="evidence" value="ECO:0000314"/>
    <property type="project" value="FlyBase"/>
</dbReference>
<dbReference type="GO" id="GO:0035097">
    <property type="term" value="C:histone methyltransferase complex"/>
    <property type="evidence" value="ECO:0000318"/>
    <property type="project" value="GO_Central"/>
</dbReference>
<dbReference type="GO" id="GO:0044665">
    <property type="term" value="C:MLL1/2 complex"/>
    <property type="evidence" value="ECO:0000250"/>
    <property type="project" value="FlyBase"/>
</dbReference>
<dbReference type="GO" id="GO:0044666">
    <property type="term" value="C:MLL3/4 complex"/>
    <property type="evidence" value="ECO:0000314"/>
    <property type="project" value="FlyBase"/>
</dbReference>
<dbReference type="GO" id="GO:0005634">
    <property type="term" value="C:nucleus"/>
    <property type="evidence" value="ECO:0000314"/>
    <property type="project" value="UniProtKB"/>
</dbReference>
<dbReference type="GO" id="GO:0048188">
    <property type="term" value="C:Set1C/COMPASS complex"/>
    <property type="evidence" value="ECO:0000314"/>
    <property type="project" value="FlyBase"/>
</dbReference>
<dbReference type="GO" id="GO:0003682">
    <property type="term" value="F:chromatin binding"/>
    <property type="evidence" value="ECO:0000314"/>
    <property type="project" value="FlyBase"/>
</dbReference>
<dbReference type="GO" id="GO:0003713">
    <property type="term" value="F:transcription coactivator activity"/>
    <property type="evidence" value="ECO:0000318"/>
    <property type="project" value="GO_Central"/>
</dbReference>
<dbReference type="GO" id="GO:0006338">
    <property type="term" value="P:chromatin remodeling"/>
    <property type="evidence" value="ECO:0000314"/>
    <property type="project" value="FlyBase"/>
</dbReference>
<dbReference type="GO" id="GO:0045893">
    <property type="term" value="P:positive regulation of DNA-templated transcription"/>
    <property type="evidence" value="ECO:0000314"/>
    <property type="project" value="FlyBase"/>
</dbReference>
<dbReference type="GO" id="GO:0045927">
    <property type="term" value="P:positive regulation of growth"/>
    <property type="evidence" value="ECO:0000316"/>
    <property type="project" value="FlyBase"/>
</dbReference>
<dbReference type="GO" id="GO:0006355">
    <property type="term" value="P:regulation of DNA-templated transcription"/>
    <property type="evidence" value="ECO:0000318"/>
    <property type="project" value="GO_Central"/>
</dbReference>
<dbReference type="CDD" id="cd00063">
    <property type="entry name" value="FN3"/>
    <property type="match status" value="2"/>
</dbReference>
<dbReference type="FunFam" id="2.120.10.80:FF:000008">
    <property type="entry name" value="host cell factor 1 isoform X1"/>
    <property type="match status" value="1"/>
</dbReference>
<dbReference type="FunFam" id="2.120.10.80:FF:000015">
    <property type="entry name" value="host cell factor 1 isoform X1"/>
    <property type="match status" value="1"/>
</dbReference>
<dbReference type="Gene3D" id="6.10.250.2590">
    <property type="match status" value="1"/>
</dbReference>
<dbReference type="Gene3D" id="2.60.40.10">
    <property type="entry name" value="Immunoglobulins"/>
    <property type="match status" value="2"/>
</dbReference>
<dbReference type="Gene3D" id="2.120.10.80">
    <property type="entry name" value="Kelch-type beta propeller"/>
    <property type="match status" value="2"/>
</dbReference>
<dbReference type="InterPro" id="IPR003961">
    <property type="entry name" value="FN3_dom"/>
</dbReference>
<dbReference type="InterPro" id="IPR036116">
    <property type="entry name" value="FN3_sf"/>
</dbReference>
<dbReference type="InterPro" id="IPR043536">
    <property type="entry name" value="HCF1/2"/>
</dbReference>
<dbReference type="InterPro" id="IPR013783">
    <property type="entry name" value="Ig-like_fold"/>
</dbReference>
<dbReference type="InterPro" id="IPR015915">
    <property type="entry name" value="Kelch-typ_b-propeller"/>
</dbReference>
<dbReference type="PANTHER" id="PTHR46003">
    <property type="entry name" value="HOST CELL FACTOR"/>
    <property type="match status" value="1"/>
</dbReference>
<dbReference type="PANTHER" id="PTHR46003:SF1">
    <property type="entry name" value="HOST CELL FACTOR"/>
    <property type="match status" value="1"/>
</dbReference>
<dbReference type="Pfam" id="PF13854">
    <property type="entry name" value="Kelch_HCF"/>
    <property type="match status" value="1"/>
</dbReference>
<dbReference type="SMART" id="SM00060">
    <property type="entry name" value="FN3"/>
    <property type="match status" value="2"/>
</dbReference>
<dbReference type="SUPFAM" id="SSF49265">
    <property type="entry name" value="Fibronectin type III"/>
    <property type="match status" value="1"/>
</dbReference>
<dbReference type="SUPFAM" id="SSF117281">
    <property type="entry name" value="Kelch motif"/>
    <property type="match status" value="1"/>
</dbReference>
<dbReference type="PROSITE" id="PS50853">
    <property type="entry name" value="FN3"/>
    <property type="match status" value="2"/>
</dbReference>
<name>HCF_DROME</name>
<organism>
    <name type="scientific">Drosophila melanogaster</name>
    <name type="common">Fruit fly</name>
    <dbReference type="NCBI Taxonomy" id="7227"/>
    <lineage>
        <taxon>Eukaryota</taxon>
        <taxon>Metazoa</taxon>
        <taxon>Ecdysozoa</taxon>
        <taxon>Arthropoda</taxon>
        <taxon>Hexapoda</taxon>
        <taxon>Insecta</taxon>
        <taxon>Pterygota</taxon>
        <taxon>Neoptera</taxon>
        <taxon>Endopterygota</taxon>
        <taxon>Diptera</taxon>
        <taxon>Brachycera</taxon>
        <taxon>Muscomorpha</taxon>
        <taxon>Ephydroidea</taxon>
        <taxon>Drosophilidae</taxon>
        <taxon>Drosophila</taxon>
        <taxon>Sophophora</taxon>
    </lineage>
</organism>
<comment type="function">
    <text evidence="5">May be involved in control of the cell cycle.</text>
</comment>
<comment type="biophysicochemical properties">
    <temperatureDependence>
        <text evidence="5 7">Optimum temperature is 20 degrees Celsius for complex formation activity of the N-terminus and 33.5 degrees Celsius for nuclear localization of the protein in vitro.</text>
    </temperatureDependence>
</comment>
<comment type="subunit">
    <text evidence="8 10 11">Core component of several methyltransferase-containing complexes. Component of the SET1 complex, composed at least of the catalytic subunit Set1, wds/WDR5, Wdr82, Rbbp5, ash2, Cfp1/CXXC1, hcf and Dpy-30L1. Component of the MLL3/4 complex composed at least of the catalytic subunit trr, ash2, Rbbp5, Dpy-30L1, wds, hcf, ptip, Pa1, Utx, Lpt and Ncoa6. Component of the Ada2a-containing (ATAC) complex composed of at least Ada2a, Atac1, Hcf, Ada3, Gcn5, Mocs2B, Charac-14, Atac3, Atac2, NC2beta and wds (PubMed:18327268).</text>
</comment>
<comment type="interaction">
    <interactant intactId="EBI-2912878">
        <id>Q9V4C8</id>
    </interactant>
    <interactant intactId="EBI-138718">
        <id>Q9V444</id>
        <label>Chrac-14</label>
    </interactant>
    <organismsDiffer>false</organismsDiffer>
    <experiments>3</experiments>
</comment>
<comment type="interaction">
    <interactant intactId="EBI-2912878">
        <id>Q9V4C8</id>
    </interactant>
    <interactant intactId="EBI-3405171">
        <id>Q5LJZ2</id>
        <label>Set1</label>
    </interactant>
    <organismsDiffer>false</organismsDiffer>
    <experiments>3</experiments>
</comment>
<comment type="subcellular location">
    <subcellularLocation>
        <location evidence="7 8 10">Nucleus</location>
    </subcellularLocation>
</comment>
<comment type="alternative products">
    <event type="alternative splicing"/>
    <isoform>
        <id>Q9V4C8-1</id>
        <name evidence="5">A</name>
        <name evidence="12">B</name>
        <sequence type="displayed"/>
    </isoform>
    <isoform>
        <id>Q9V4C8-6</id>
        <name>E</name>
        <sequence type="described" ref="VSP_047937 VSP_047938"/>
    </isoform>
    <isoform>
        <id>Q9V4C8-5</id>
        <name>F</name>
        <sequence type="described" ref="VSP_047712"/>
    </isoform>
    <isoform>
        <id>Q9V4C8-3</id>
        <name evidence="5">D</name>
        <name evidence="13">8-11</name>
        <sequence type="not described"/>
    </isoform>
    <isoform>
        <id>Q9V4C8-4</id>
        <name>G</name>
        <name evidence="13">11-13</name>
        <sequence type="not described"/>
    </isoform>
</comment>
<comment type="developmental stage">
    <text evidence="5">Expressed throughout development and in adults.</text>
</comment>
<comment type="PTM">
    <text evidence="5">Proteolytic cleavage occurs between amino acids 900 and 1100 within the non-conserved central region, giving rise to two independent but tightly associated N- and C-terminal subunits.</text>
</comment>
<comment type="miscellaneous">
    <text evidence="15">Due to lack of HCF repeats, the cleavage process occurs via a different mechanism to that in the mammalian HCFC1.</text>
</comment>
<comment type="miscellaneous">
    <molecule>Isoform D</molecule>
    <text evidence="5">Exons 9 and 10 deleted.</text>
</comment>
<comment type="miscellaneous">
    <molecule>Isoform G</molecule>
    <text evidence="14">Exon 12 deleted.</text>
</comment>
<comment type="sequence caution" evidence="14">
    <conflict type="erroneous initiation">
        <sequence resource="EMBL-CDS" id="AAL28531"/>
    </conflict>
    <text>Truncated N-terminus.</text>
</comment>
<reference evidence="14 20" key="1">
    <citation type="journal article" date="2003" name="Gene">
        <title>Primary structure and compartmentalization of Drosophila melanogaster host cell factor.</title>
        <authorList>
            <person name="Izeta A."/>
            <person name="Malcomber S."/>
            <person name="O'Hare P."/>
        </authorList>
    </citation>
    <scope>NUCLEOTIDE SEQUENCE [MRNA] (ISOFORM A)</scope>
    <scope>SUBCELLULAR LOCATION</scope>
    <scope>NUCLEAR LOCALIZATION SIGNAL</scope>
    <scope>MUTAGENESIS OF 1470-LYS-ARG-1471 AND 1492-LYS--ARG-1495</scope>
    <source>
        <tissue evidence="7">Embryo</tissue>
    </source>
</reference>
<reference evidence="14 17" key="2">
    <citation type="journal article" date="2003" name="J. Cell. Physiol.">
        <title>Molecular cloning of Drosophila HCF reveals proteolytic processing and self-association of the encoded protein.</title>
        <authorList>
            <person name="Mahajan S.S."/>
            <person name="Johnson K.M."/>
            <person name="Wilson A.C."/>
        </authorList>
    </citation>
    <scope>NUCLEOTIDE SEQUENCE [MRNA] (ISOFORMS A; D AND G)</scope>
    <scope>FUNCTION</scope>
    <scope>DEVELOPMENTAL STAGE</scope>
    <scope>PROTEOLYTIC CLEAVAGE</scope>
    <source>
        <strain>Berkeley</strain>
        <tissue evidence="5">Embryo</tissue>
    </source>
</reference>
<reference evidence="14 16" key="3">
    <citation type="journal article" date="2000" name="Science">
        <title>The genome sequence of Drosophila melanogaster.</title>
        <authorList>
            <person name="Adams M.D."/>
            <person name="Celniker S.E."/>
            <person name="Holt R.A."/>
            <person name="Evans C.A."/>
            <person name="Gocayne J.D."/>
            <person name="Amanatides P.G."/>
            <person name="Scherer S.E."/>
            <person name="Li P.W."/>
            <person name="Hoskins R.A."/>
            <person name="Galle R.F."/>
            <person name="George R.A."/>
            <person name="Lewis S.E."/>
            <person name="Richards S."/>
            <person name="Ashburner M."/>
            <person name="Henderson S.N."/>
            <person name="Sutton G.G."/>
            <person name="Wortman J.R."/>
            <person name="Yandell M.D."/>
            <person name="Zhang Q."/>
            <person name="Chen L.X."/>
            <person name="Brandon R.C."/>
            <person name="Rogers Y.-H.C."/>
            <person name="Blazej R.G."/>
            <person name="Champe M."/>
            <person name="Pfeiffer B.D."/>
            <person name="Wan K.H."/>
            <person name="Doyle C."/>
            <person name="Baxter E.G."/>
            <person name="Helt G."/>
            <person name="Nelson C.R."/>
            <person name="Miklos G.L.G."/>
            <person name="Abril J.F."/>
            <person name="Agbayani A."/>
            <person name="An H.-J."/>
            <person name="Andrews-Pfannkoch C."/>
            <person name="Baldwin D."/>
            <person name="Ballew R.M."/>
            <person name="Basu A."/>
            <person name="Baxendale J."/>
            <person name="Bayraktaroglu L."/>
            <person name="Beasley E.M."/>
            <person name="Beeson K.Y."/>
            <person name="Benos P.V."/>
            <person name="Berman B.P."/>
            <person name="Bhandari D."/>
            <person name="Bolshakov S."/>
            <person name="Borkova D."/>
            <person name="Botchan M.R."/>
            <person name="Bouck J."/>
            <person name="Brokstein P."/>
            <person name="Brottier P."/>
            <person name="Burtis K.C."/>
            <person name="Busam D.A."/>
            <person name="Butler H."/>
            <person name="Cadieu E."/>
            <person name="Center A."/>
            <person name="Chandra I."/>
            <person name="Cherry J.M."/>
            <person name="Cawley S."/>
            <person name="Dahlke C."/>
            <person name="Davenport L.B."/>
            <person name="Davies P."/>
            <person name="de Pablos B."/>
            <person name="Delcher A."/>
            <person name="Deng Z."/>
            <person name="Mays A.D."/>
            <person name="Dew I."/>
            <person name="Dietz S.M."/>
            <person name="Dodson K."/>
            <person name="Doup L.E."/>
            <person name="Downes M."/>
            <person name="Dugan-Rocha S."/>
            <person name="Dunkov B.C."/>
            <person name="Dunn P."/>
            <person name="Durbin K.J."/>
            <person name="Evangelista C.C."/>
            <person name="Ferraz C."/>
            <person name="Ferriera S."/>
            <person name="Fleischmann W."/>
            <person name="Fosler C."/>
            <person name="Gabrielian A.E."/>
            <person name="Garg N.S."/>
            <person name="Gelbart W.M."/>
            <person name="Glasser K."/>
            <person name="Glodek A."/>
            <person name="Gong F."/>
            <person name="Gorrell J.H."/>
            <person name="Gu Z."/>
            <person name="Guan P."/>
            <person name="Harris M."/>
            <person name="Harris N.L."/>
            <person name="Harvey D.A."/>
            <person name="Heiman T.J."/>
            <person name="Hernandez J.R."/>
            <person name="Houck J."/>
            <person name="Hostin D."/>
            <person name="Houston K.A."/>
            <person name="Howland T.J."/>
            <person name="Wei M.-H."/>
            <person name="Ibegwam C."/>
            <person name="Jalali M."/>
            <person name="Kalush F."/>
            <person name="Karpen G.H."/>
            <person name="Ke Z."/>
            <person name="Kennison J.A."/>
            <person name="Ketchum K.A."/>
            <person name="Kimmel B.E."/>
            <person name="Kodira C.D."/>
            <person name="Kraft C.L."/>
            <person name="Kravitz S."/>
            <person name="Kulp D."/>
            <person name="Lai Z."/>
            <person name="Lasko P."/>
            <person name="Lei Y."/>
            <person name="Levitsky A.A."/>
            <person name="Li J.H."/>
            <person name="Li Z."/>
            <person name="Liang Y."/>
            <person name="Lin X."/>
            <person name="Liu X."/>
            <person name="Mattei B."/>
            <person name="McIntosh T.C."/>
            <person name="McLeod M.P."/>
            <person name="McPherson D."/>
            <person name="Merkulov G."/>
            <person name="Milshina N.V."/>
            <person name="Mobarry C."/>
            <person name="Morris J."/>
            <person name="Moshrefi A."/>
            <person name="Mount S.M."/>
            <person name="Moy M."/>
            <person name="Murphy B."/>
            <person name="Murphy L."/>
            <person name="Muzny D.M."/>
            <person name="Nelson D.L."/>
            <person name="Nelson D.R."/>
            <person name="Nelson K.A."/>
            <person name="Nixon K."/>
            <person name="Nusskern D.R."/>
            <person name="Pacleb J.M."/>
            <person name="Palazzolo M."/>
            <person name="Pittman G.S."/>
            <person name="Pan S."/>
            <person name="Pollard J."/>
            <person name="Puri V."/>
            <person name="Reese M.G."/>
            <person name="Reinert K."/>
            <person name="Remington K."/>
            <person name="Saunders R.D.C."/>
            <person name="Scheeler F."/>
            <person name="Shen H."/>
            <person name="Shue B.C."/>
            <person name="Siden-Kiamos I."/>
            <person name="Simpson M."/>
            <person name="Skupski M.P."/>
            <person name="Smith T.J."/>
            <person name="Spier E."/>
            <person name="Spradling A.C."/>
            <person name="Stapleton M."/>
            <person name="Strong R."/>
            <person name="Sun E."/>
            <person name="Svirskas R."/>
            <person name="Tector C."/>
            <person name="Turner R."/>
            <person name="Venter E."/>
            <person name="Wang A.H."/>
            <person name="Wang X."/>
            <person name="Wang Z.-Y."/>
            <person name="Wassarman D.A."/>
            <person name="Weinstock G.M."/>
            <person name="Weissenbach J."/>
            <person name="Williams S.M."/>
            <person name="Woodage T."/>
            <person name="Worley K.C."/>
            <person name="Wu D."/>
            <person name="Yang S."/>
            <person name="Yao Q.A."/>
            <person name="Ye J."/>
            <person name="Yeh R.-F."/>
            <person name="Zaveri J.S."/>
            <person name="Zhan M."/>
            <person name="Zhang G."/>
            <person name="Zhao Q."/>
            <person name="Zheng L."/>
            <person name="Zheng X.H."/>
            <person name="Zhong F.N."/>
            <person name="Zhong W."/>
            <person name="Zhou X."/>
            <person name="Zhu S.C."/>
            <person name="Zhu X."/>
            <person name="Smith H.O."/>
            <person name="Gibbs R.A."/>
            <person name="Myers E.W."/>
            <person name="Rubin G.M."/>
            <person name="Venter J.C."/>
        </authorList>
    </citation>
    <scope>NUCLEOTIDE SEQUENCE [LARGE SCALE GENOMIC DNA]</scope>
    <source>
        <strain evidence="4">Berkeley</strain>
    </source>
</reference>
<reference evidence="14 16" key="4">
    <citation type="journal article" date="2002" name="Genome Biol.">
        <title>Annotation of the Drosophila melanogaster euchromatic genome: a systematic review.</title>
        <authorList>
            <person name="Misra S."/>
            <person name="Crosby M.A."/>
            <person name="Mungall C.J."/>
            <person name="Matthews B.B."/>
            <person name="Campbell K.S."/>
            <person name="Hradecky P."/>
            <person name="Huang Y."/>
            <person name="Kaminker J.S."/>
            <person name="Millburn G.H."/>
            <person name="Prochnik S.E."/>
            <person name="Smith C.D."/>
            <person name="Tupy J.L."/>
            <person name="Whitfield E.J."/>
            <person name="Bayraktaroglu L."/>
            <person name="Berman B.P."/>
            <person name="Bettencourt B.R."/>
            <person name="Celniker S.E."/>
            <person name="de Grey A.D.N.J."/>
            <person name="Drysdale R.A."/>
            <person name="Harris N.L."/>
            <person name="Richter J."/>
            <person name="Russo S."/>
            <person name="Schroeder A.J."/>
            <person name="Shu S.Q."/>
            <person name="Stapleton M."/>
            <person name="Yamada C."/>
            <person name="Ashburner M."/>
            <person name="Gelbart W.M."/>
            <person name="Rubin G.M."/>
            <person name="Lewis S.E."/>
        </authorList>
    </citation>
    <scope>GENOME REANNOTATION</scope>
    <scope>ALTERNATIVE SPLICING</scope>
    <source>
        <strain>Berkeley</strain>
    </source>
</reference>
<reference evidence="14 18" key="5">
    <citation type="journal article" date="2002" name="Genome Biol.">
        <title>A Drosophila full-length cDNA resource.</title>
        <authorList>
            <person name="Stapleton M."/>
            <person name="Carlson J.W."/>
            <person name="Brokstein P."/>
            <person name="Yu C."/>
            <person name="Champe M."/>
            <person name="George R.A."/>
            <person name="Guarin H."/>
            <person name="Kronmiller B."/>
            <person name="Pacleb J.M."/>
            <person name="Park S."/>
            <person name="Wan K.H."/>
            <person name="Rubin G.M."/>
            <person name="Celniker S.E."/>
        </authorList>
    </citation>
    <scope>NUCLEOTIDE SEQUENCE [LARGE SCALE MRNA] (ISOFORM A)</scope>
    <source>
        <strain evidence="18">Berkeley</strain>
        <tissue evidence="6">Embryo</tissue>
        <tissue evidence="6">Ovary</tissue>
    </source>
</reference>
<reference evidence="14 19" key="6">
    <citation type="submission" date="2004-08" db="EMBL/GenBank/DDBJ databases">
        <authorList>
            <person name="Stapleton M."/>
            <person name="Carlson J.W."/>
            <person name="Chavez C."/>
            <person name="Frise E."/>
            <person name="George R.A."/>
            <person name="Pacleb J.M."/>
            <person name="Park S."/>
            <person name="Wan K.H."/>
            <person name="Yu C."/>
            <person name="Rubin G.M."/>
            <person name="Celniker S.E."/>
        </authorList>
    </citation>
    <scope>NUCLEOTIDE SEQUENCE [LARGE SCALE MRNA] (ISOFORM A)</scope>
    <source>
        <strain evidence="19">Berkeley</strain>
        <tissue>Embryo</tissue>
    </source>
</reference>
<reference key="7">
    <citation type="journal article" date="2008" name="Nat. Struct. Mol. Biol.">
        <title>ATAC is a double histone acetyltransferase complex that stimulates nucleosome sliding.</title>
        <authorList>
            <person name="Suganuma T."/>
            <person name="Gutierrez J.L."/>
            <person name="Li B."/>
            <person name="Florens L."/>
            <person name="Swanson S.K."/>
            <person name="Washburn M.P."/>
            <person name="Abmayr S.M."/>
            <person name="Workman J.L."/>
        </authorList>
    </citation>
    <scope>IDENTIFICATION BY MASS SPECTROMETRY</scope>
    <scope>IDENTIFICATION IN THE ATAC COMPLEX</scope>
    <scope>SUBCELLULAR LOCATION</scope>
</reference>
<reference key="8">
    <citation type="journal article" date="2008" name="J. Proteome Res.">
        <title>Phosphoproteome analysis of Drosophila melanogaster embryos.</title>
        <authorList>
            <person name="Zhai B."/>
            <person name="Villen J."/>
            <person name="Beausoleil S.A."/>
            <person name="Mintseris J."/>
            <person name="Gygi S.P."/>
        </authorList>
    </citation>
    <scope>PHOSPHORYLATION [LARGE SCALE ANALYSIS] AT SER-477; SER-958; SER-966; THR-1126 AND SER-1489</scope>
    <scope>IDENTIFICATION BY MASS SPECTROMETRY</scope>
    <source>
        <tissue>Embryo</tissue>
    </source>
</reference>
<reference key="9">
    <citation type="journal article" date="2011" name="EMBO J.">
        <title>Drosophila Set1 is the major histone H3 lysine 4 trimethyltransferase with role in transcription.</title>
        <authorList>
            <person name="Ardehali M.B."/>
            <person name="Mei A."/>
            <person name="Zobeck K.L."/>
            <person name="Caron M."/>
            <person name="Lis J.T."/>
            <person name="Kusch T."/>
        </authorList>
    </citation>
    <scope>IDENTIFICATION IN THE SET1 COMPLEX</scope>
    <scope>SUBCELLULAR LOCATION</scope>
</reference>
<reference key="10">
    <citation type="journal article" date="2011" name="Mol. Cell. Biol.">
        <title>The COMPASS family of H3K4 methylases in Drosophila.</title>
        <authorList>
            <person name="Mohan M."/>
            <person name="Herz H.M."/>
            <person name="Smith E.R."/>
            <person name="Zhang Y."/>
            <person name="Jackson J."/>
            <person name="Washburn M.P."/>
            <person name="Florens L."/>
            <person name="Eissenberg J.C."/>
            <person name="Shilatifard A."/>
        </authorList>
    </citation>
    <scope>IDENTIFICATION IN THE SET1 AND MLL3/4 COMPLEXES</scope>
</reference>
<feature type="chain" id="PRO_0000016647" description="HCF N-terminal chain">
    <location>
        <begin position="1"/>
        <end status="unknown"/>
    </location>
</feature>
<feature type="chain" id="PRO_0000016648" description="HCF C-terminal chain">
    <location>
        <begin status="unknown"/>
        <end position="1500"/>
    </location>
</feature>
<feature type="repeat" description="Kelch 1" evidence="1">
    <location>
        <begin position="85"/>
        <end position="133"/>
    </location>
</feature>
<feature type="repeat" description="Kelch 2" evidence="1">
    <location>
        <begin position="135"/>
        <end position="181"/>
    </location>
</feature>
<feature type="repeat" description="Kelch 3" evidence="1">
    <location>
        <begin position="189"/>
        <end position="237"/>
    </location>
</feature>
<feature type="repeat" description="Kelch 4" evidence="1">
    <location>
        <begin position="259"/>
        <end position="307"/>
    </location>
</feature>
<feature type="repeat" description="Kelch 5" evidence="1">
    <location>
        <begin position="308"/>
        <end position="373"/>
    </location>
</feature>
<feature type="domain" description="Fibronectin type-III 1" evidence="2">
    <location>
        <begin position="1244"/>
        <end position="1341"/>
    </location>
</feature>
<feature type="domain" description="Fibronectin type-III 2" evidence="2">
    <location>
        <begin position="1346"/>
        <end position="1457"/>
    </location>
</feature>
<feature type="region of interest" description="Disordered" evidence="3">
    <location>
        <begin position="517"/>
        <end position="543"/>
    </location>
</feature>
<feature type="region of interest" description="Disordered" evidence="3">
    <location>
        <begin position="1024"/>
        <end position="1061"/>
    </location>
</feature>
<feature type="region of interest" description="Disordered" evidence="3">
    <location>
        <begin position="1161"/>
        <end position="1185"/>
    </location>
</feature>
<feature type="region of interest" description="Disordered" evidence="3">
    <location>
        <begin position="1458"/>
        <end position="1500"/>
    </location>
</feature>
<feature type="short sequence motif" description="Bipartite nuclear localization signal">
    <location>
        <begin position="1470"/>
        <end position="1495"/>
    </location>
</feature>
<feature type="compositionally biased region" description="Polar residues" evidence="3">
    <location>
        <begin position="517"/>
        <end position="528"/>
    </location>
</feature>
<feature type="compositionally biased region" description="Low complexity" evidence="3">
    <location>
        <begin position="1036"/>
        <end position="1047"/>
    </location>
</feature>
<feature type="compositionally biased region" description="Basic and acidic residues" evidence="3">
    <location>
        <begin position="1166"/>
        <end position="1178"/>
    </location>
</feature>
<feature type="compositionally biased region" description="Polar residues" evidence="3">
    <location>
        <begin position="1477"/>
        <end position="1488"/>
    </location>
</feature>
<feature type="compositionally biased region" description="Basic residues" evidence="3">
    <location>
        <begin position="1490"/>
        <end position="1500"/>
    </location>
</feature>
<feature type="modified residue" description="Phosphoserine" evidence="9">
    <location>
        <position position="477"/>
    </location>
</feature>
<feature type="modified residue" description="Phosphoserine" evidence="9">
    <location>
        <position position="958"/>
    </location>
</feature>
<feature type="modified residue" description="Phosphoserine" evidence="9">
    <location>
        <position position="966"/>
    </location>
</feature>
<feature type="modified residue" description="Phosphothreonine" evidence="9">
    <location>
        <position position="1126"/>
    </location>
</feature>
<feature type="modified residue" description="Phosphoserine" evidence="9">
    <location>
        <position position="1489"/>
    </location>
</feature>
<feature type="splice variant" id="VSP_047712" description="In isoform F." evidence="14">
    <location>
        <begin position="392"/>
        <end position="443"/>
    </location>
</feature>
<feature type="splice variant" id="VSP_047937" description="In isoform E." evidence="14">
    <original>V</original>
    <variation>VRV</variation>
    <location>
        <position position="392"/>
    </location>
</feature>
<feature type="splice variant" id="VSP_047938" description="In isoform E." evidence="14">
    <location>
        <begin position="794"/>
        <end position="811"/>
    </location>
</feature>
<feature type="mutagenesis site" description="Causes accumulation exclusively in the cytoplasm." evidence="7">
    <location>
        <begin position="1470"/>
        <end position="1471"/>
    </location>
</feature>
<feature type="mutagenesis site" description="Causes accumulation exclusively in the cytoplasm." evidence="7">
    <location>
        <begin position="1492"/>
        <end position="1495"/>
    </location>
</feature>
<feature type="sequence conflict" description="In Ref. 2; AAK28427." evidence="14" ref="2">
    <original>K</original>
    <variation>T</variation>
    <location>
        <position position="694"/>
    </location>
</feature>
<feature type="sequence conflict" description="In Ref. 2; AAK28427." evidence="14" ref="2">
    <original>R</original>
    <variation>K</variation>
    <location>
        <position position="956"/>
    </location>
</feature>